<keyword id="KW-0167">Capsid protein</keyword>
<keyword id="KW-0175">Coiled coil</keyword>
<keyword id="KW-1015">Disulfide bond</keyword>
<keyword id="KW-0348">Hemagglutinin</keyword>
<keyword id="KW-1032">Host cell membrane</keyword>
<keyword id="KW-1035">Host cytoplasm</keyword>
<keyword id="KW-1037">Host cytoskeleton</keyword>
<keyword id="KW-1038">Host endoplasmic reticulum</keyword>
<keyword id="KW-1043">Host membrane</keyword>
<keyword id="KW-0945">Host-virus interaction</keyword>
<keyword id="KW-0472">Membrane</keyword>
<keyword id="KW-1152">Outer capsid protein</keyword>
<keyword id="KW-1161">Viral attachment to host cell</keyword>
<keyword id="KW-1162">Viral penetration into host cytoplasm</keyword>
<keyword id="KW-1173">Viral penetration via permeabilization of host membrane</keyword>
<keyword id="KW-0946">Virion</keyword>
<keyword id="KW-1160">Virus entry into host cell</keyword>
<dbReference type="EMBL" id="Y00127">
    <property type="protein sequence ID" value="CAA68325.1"/>
    <property type="molecule type" value="mRNA"/>
</dbReference>
<dbReference type="SMR" id="P08713"/>
<dbReference type="GO" id="GO:0044172">
    <property type="term" value="C:host cell endoplasmic reticulum-Golgi intermediate compartment"/>
    <property type="evidence" value="ECO:0007669"/>
    <property type="project" value="UniProtKB-SubCell"/>
</dbReference>
<dbReference type="GO" id="GO:0020002">
    <property type="term" value="C:host cell plasma membrane"/>
    <property type="evidence" value="ECO:0007669"/>
    <property type="project" value="UniProtKB-SubCell"/>
</dbReference>
<dbReference type="GO" id="GO:0044168">
    <property type="term" value="C:host cell rough endoplasmic reticulum"/>
    <property type="evidence" value="ECO:0007669"/>
    <property type="project" value="UniProtKB-SubCell"/>
</dbReference>
<dbReference type="GO" id="GO:0044163">
    <property type="term" value="C:host cytoskeleton"/>
    <property type="evidence" value="ECO:0007669"/>
    <property type="project" value="UniProtKB-SubCell"/>
</dbReference>
<dbReference type="GO" id="GO:0016020">
    <property type="term" value="C:membrane"/>
    <property type="evidence" value="ECO:0007669"/>
    <property type="project" value="UniProtKB-KW"/>
</dbReference>
<dbReference type="GO" id="GO:0039624">
    <property type="term" value="C:viral outer capsid"/>
    <property type="evidence" value="ECO:0007669"/>
    <property type="project" value="UniProtKB-UniRule"/>
</dbReference>
<dbReference type="GO" id="GO:0039665">
    <property type="term" value="P:permeabilization of host organelle membrane involved in viral entry into host cell"/>
    <property type="evidence" value="ECO:0007669"/>
    <property type="project" value="UniProtKB-UniRule"/>
</dbReference>
<dbReference type="GO" id="GO:0019062">
    <property type="term" value="P:virion attachment to host cell"/>
    <property type="evidence" value="ECO:0007669"/>
    <property type="project" value="UniProtKB-UniRule"/>
</dbReference>
<dbReference type="Gene3D" id="1.20.5.170">
    <property type="match status" value="1"/>
</dbReference>
<dbReference type="Gene3D" id="2.60.120.200">
    <property type="match status" value="1"/>
</dbReference>
<dbReference type="HAMAP" id="MF_04132">
    <property type="entry name" value="Rota_A_VP4"/>
    <property type="match status" value="1"/>
</dbReference>
<dbReference type="HAMAP" id="MF_04125">
    <property type="entry name" value="Rota_VP4"/>
    <property type="match status" value="1"/>
</dbReference>
<dbReference type="InterPro" id="IPR013320">
    <property type="entry name" value="ConA-like_dom_sf"/>
</dbReference>
<dbReference type="InterPro" id="IPR042546">
    <property type="entry name" value="Rota_A_VP4"/>
</dbReference>
<dbReference type="InterPro" id="IPR035330">
    <property type="entry name" value="Rota_VP4_MID"/>
</dbReference>
<dbReference type="InterPro" id="IPR038017">
    <property type="entry name" value="Rota_VP4_MID_sf"/>
</dbReference>
<dbReference type="InterPro" id="IPR000416">
    <property type="entry name" value="VP4_concanavalin-like"/>
</dbReference>
<dbReference type="InterPro" id="IPR035329">
    <property type="entry name" value="VP4_helical"/>
</dbReference>
<dbReference type="Pfam" id="PF17477">
    <property type="entry name" value="Rota_VP4_MID"/>
    <property type="match status" value="1"/>
</dbReference>
<dbReference type="Pfam" id="PF00426">
    <property type="entry name" value="VP4_haemagglut"/>
    <property type="match status" value="1"/>
</dbReference>
<dbReference type="Pfam" id="PF17478">
    <property type="entry name" value="VP4_helical"/>
    <property type="match status" value="1"/>
</dbReference>
<dbReference type="SUPFAM" id="SSF49899">
    <property type="entry name" value="Concanavalin A-like lectins/glucanases"/>
    <property type="match status" value="1"/>
</dbReference>
<dbReference type="SUPFAM" id="SSF111379">
    <property type="entry name" value="VP4 membrane interaction domain"/>
    <property type="match status" value="1"/>
</dbReference>
<protein>
    <recommendedName>
        <fullName evidence="1">Outer capsid protein VP4</fullName>
    </recommendedName>
    <alternativeName>
        <fullName evidence="1">Hemagglutinin</fullName>
    </alternativeName>
    <component>
        <recommendedName>
            <fullName evidence="1">Outer capsid protein VP8*</fullName>
        </recommendedName>
    </component>
    <component>
        <recommendedName>
            <fullName evidence="1">Outer capsid protein VP5*</fullName>
        </recommendedName>
    </component>
</protein>
<reference key="1">
    <citation type="journal article" date="1987" name="Nucleic Acids Res.">
        <title>The complete nucleotide sequence of bovine rotavirus C486 gene 4 cDNA.</title>
        <authorList>
            <person name="Potter A.A."/>
            <person name="Cox G."/>
            <person name="Parker M."/>
            <person name="Babiuk L.A."/>
        </authorList>
    </citation>
    <scope>NUCLEOTIDE SEQUENCE [MRNA]</scope>
</reference>
<feature type="chain" id="PRO_0000041024" description="Outer capsid protein VP4" evidence="1">
    <location>
        <begin position="1"/>
        <end position="776"/>
    </location>
</feature>
<feature type="chain" id="PRO_0000041025" description="Outer capsid protein VP8*" evidence="1">
    <location>
        <begin position="1"/>
        <end position="231"/>
    </location>
</feature>
<feature type="chain" id="PRO_0000041026" description="Outer capsid protein VP5*" evidence="1">
    <location>
        <begin position="248"/>
        <end position="776"/>
    </location>
</feature>
<feature type="region of interest" description="Spike head" evidence="1">
    <location>
        <begin position="65"/>
        <end position="224"/>
    </location>
</feature>
<feature type="region of interest" description="Spike body and stalk (antigen domain)" evidence="1">
    <location>
        <begin position="248"/>
        <end position="479"/>
    </location>
</feature>
<feature type="region of interest" description="Hydrophobic; possible role in virus entry into host cell" evidence="1">
    <location>
        <begin position="389"/>
        <end position="409"/>
    </location>
</feature>
<feature type="region of interest" description="Spike foot" evidence="1">
    <location>
        <begin position="510"/>
        <end position="776"/>
    </location>
</feature>
<feature type="coiled-coil region" evidence="1">
    <location>
        <begin position="484"/>
        <end position="518"/>
    </location>
</feature>
<feature type="short sequence motif" description="DGE motif; interaction with ITGA2/ITGB1 heterodimer" evidence="1">
    <location>
        <begin position="308"/>
        <end position="310"/>
    </location>
</feature>
<feature type="short sequence motif" description="YGL motif; interaction with ITGA4" evidence="1">
    <location>
        <begin position="448"/>
        <end position="450"/>
    </location>
</feature>
<feature type="short sequence motif" description="KID motif; interaction with HSPA8" evidence="1">
    <location>
        <begin position="644"/>
        <end position="646"/>
    </location>
</feature>
<feature type="site" description="Binding to sialic acid" evidence="1">
    <location>
        <position position="101"/>
    </location>
</feature>
<feature type="site" description="Binding to sialic acid" evidence="1">
    <location>
        <position position="190"/>
    </location>
</feature>
<feature type="site" description="Cleavage" evidence="1">
    <location>
        <begin position="231"/>
        <end position="232"/>
    </location>
</feature>
<feature type="site" description="Cleavage" evidence="1">
    <location>
        <begin position="241"/>
        <end position="242"/>
    </location>
</feature>
<feature type="site" description="Cleavage; associated with enhancement of infectivity" evidence="1">
    <location>
        <begin position="247"/>
        <end position="248"/>
    </location>
</feature>
<feature type="disulfide bond" evidence="1">
    <location>
        <begin position="203"/>
        <end position="216"/>
    </location>
</feature>
<feature type="disulfide bond" evidence="1">
    <location>
        <begin position="318"/>
        <end position="380"/>
    </location>
</feature>
<comment type="function">
    <molecule>Outer capsid protein VP4</molecule>
    <text evidence="1">Spike-forming protein that mediates virion attachment to the host epithelial cell receptors and plays a major role in cell penetration, determination of host range restriction and virulence. Rotavirus attachment and entry into the host cell probably involves multiple sequential contacts between the outer capsid proteins VP4 and VP7, and the cell receptors. It is subsequently lost, together with VP7, following virus entry into the host cell. Following entry into the host cell, low intracellular or intravesicular Ca(2+) concentration probably causes the calcium-stabilized VP7 trimers to dissociate from the virion. This step is probably necessary for the membrane-disrupting entry step and the release of VP4, which is locked onto the virion by VP7. During the virus exit from the host cell, VP4 seems to be required to target the newly formed virions to the host cell lipid rafts.</text>
</comment>
<comment type="function">
    <molecule>Outer capsid protein VP5*</molecule>
    <text evidence="1">Forms the spike 'foot' and 'body' and acts as a membrane permeabilization protein that mediates release of viral particles from endosomal compartments into the cytoplasm. During entry, the part of VP5* that protrudes from the virus folds back on itself and reorganizes from a local dimer to a trimer. This reorganization may be linked to membrane penetration by exposing VP5* hydrophobic region. In integrin-dependent strains, VP5* targets the integrin heterodimer ITGA2/ITGB1 for cell attachment.</text>
</comment>
<comment type="function">
    <molecule>Outer capsid protein VP8*</molecule>
    <text evidence="1">Forms the head of the spikes and mediates the recognition of specific host cell surface glycans. It is the viral hemagglutinin and an important target of neutralizing antibodies. In sialic acid-dependent strains, VP8* binds to host cell sialic acid, most probably a ganglioside, providing the initial contact. In some other strains, VP8* mediates the attachment to histo-blood group antigens (HBGAs) for viral entry.</text>
</comment>
<comment type="subunit">
    <molecule>Outer capsid protein VP4</molecule>
    <text evidence="1">Homotrimer. VP4 adopts a dimeric appearance above the capsid surface, while forming a trimeric base anchored inside the capsid layer. Only hints of the third molecule are observed above the capsid surface. It probably performs a series of molecular rearrangements during viral entry. Prior to trypsin cleavage, it is flexible. The priming trypsin cleavage triggers its rearrangement into rigid spikes with approximate two-fold symmetry of their protruding parts. After an unknown second triggering event, cleaved VP4 may undergo another rearrangement, in which two VP5* subunits fold back on themselves and join a third subunit to form a tightly associated trimer, shaped like a folded umbrella. Interacts with VP6. Interacts with VP7.</text>
</comment>
<comment type="subunit">
    <molecule>Outer capsid protein VP5*</molecule>
    <text evidence="1">Homotrimer. The trimer is coiled-coil stabilized by its C-terminus, however, its N-terminus, known as antigen domain or 'body', seems to be flexible allowing it to self-associate either as a dimer or a trimer.</text>
</comment>
<comment type="subcellular location">
    <molecule>Outer capsid protein VP4</molecule>
    <subcellularLocation>
        <location evidence="1">Virion</location>
    </subcellularLocation>
    <subcellularLocation>
        <location evidence="1">Host rough endoplasmic reticulum</location>
    </subcellularLocation>
    <subcellularLocation>
        <location evidence="1">Host cell membrane</location>
    </subcellularLocation>
    <subcellularLocation>
        <location evidence="1">Host cytoplasm</location>
        <location evidence="1">Host cytoskeleton</location>
    </subcellularLocation>
    <subcellularLocation>
        <location evidence="1">Host endoplasmic reticulum-Golgi intermediate compartment</location>
    </subcellularLocation>
    <text evidence="1">The outer layer contains 180 copies of VP4, grouped as 60 dimers. Immature double-layered particles assembled in the cytoplasm bud across the membrane of the endoplasmic reticulum, acquiring during this process a transient lipid membrane that is modified with the ER resident viral glycoproteins NSP4 and VP7; these enveloped particles also contain VP4. As the particles move towards the interior of the ER cisternae, the transient lipid membrane and the non-structural protein NSP4 are lost, while the virus surface proteins VP4 and VP7 rearrange to form the outermost virus protein layer, yielding mature infectious triple-layered particles. VP4 also seems to associate with lipid rafts of the host cell membrane probably for the exit of the virus from the infected cell by an alternate pathway.</text>
</comment>
<comment type="subcellular location">
    <molecule>Outer capsid protein VP8*</molecule>
    <subcellularLocation>
        <location evidence="1">Virion</location>
    </subcellularLocation>
    <text evidence="1">Outer capsid protein.</text>
</comment>
<comment type="subcellular location">
    <molecule>Outer capsid protein VP5*</molecule>
    <subcellularLocation>
        <location evidence="1">Virion</location>
    </subcellularLocation>
    <text evidence="1">Outer capsid protein.</text>
</comment>
<comment type="domain">
    <molecule>Outer capsid protein VP4</molecule>
    <text evidence="1">The VP4 spike is divided into a foot, a stalk and body, and a head.</text>
</comment>
<comment type="PTM">
    <molecule>Outer capsid protein VP4</molecule>
    <text evidence="1">Proteolytic cleavage by trypsin results in activation of VP4 functions and greatly increases infectivity. The penetration into the host cell is dependent on trypsin treatment of VP4. It produces two peptides, VP5* and VP8* that remain associated with the virion. Cleavage of VP4 by trypsin probably occurs in vivo in the lumen of the intestine prior to infection of enterocytes. Trypsin seems to be incorporated into the three-layered viral particles but remains inactive as long as the viral outer capsid is intact and would only be activated upon the solubilization of the latter.</text>
</comment>
<comment type="miscellaneous">
    <text evidence="1">In group A rotaviruses, VP4 defines the P serotype.</text>
</comment>
<comment type="miscellaneous">
    <text evidence="1">Some rotavirus strains are neuraminidase-sensitive and require sialic acid to attach to the cell surface. Some rotavirus strains are integrin-dependent. Some rotavirus strains depend on ganglioside for their entry into the host cell. Hsp70 also seems to be involved in the entry of some strains.</text>
</comment>
<comment type="miscellaneous">
    <text evidence="1">This strain probably uses sialic acid to attach to the host cell.</text>
</comment>
<comment type="similarity">
    <text evidence="1">Belongs to the rotavirus VP4 family.</text>
</comment>
<accession>P08713</accession>
<organism>
    <name type="scientific">Rotavirus A (strain RVA/Cow/Canada/C486/1977/G6P6[1])</name>
    <name type="common">RV-A</name>
    <dbReference type="NCBI Taxonomy" id="10931"/>
    <lineage>
        <taxon>Viruses</taxon>
        <taxon>Riboviria</taxon>
        <taxon>Orthornavirae</taxon>
        <taxon>Duplornaviricota</taxon>
        <taxon>Resentoviricetes</taxon>
        <taxon>Reovirales</taxon>
        <taxon>Sedoreoviridae</taxon>
        <taxon>Rotavirus</taxon>
        <taxon>Rotavirus A</taxon>
    </lineage>
</organism>
<proteinExistence type="evidence at transcript level"/>
<name>VP4_ROTBC</name>
<evidence type="ECO:0000255" key="1">
    <source>
        <dbReference type="HAMAP-Rule" id="MF_04132"/>
    </source>
</evidence>
<organismHost>
    <name type="scientific">Bos taurus</name>
    <name type="common">Bovine</name>
    <dbReference type="NCBI Taxonomy" id="9913"/>
</organismHost>
<sequence>MASLIYRQLLTNSYTVELSDEIQEIGSTKTQNVTVNPGPFAQTNYASVNWGPGETNDSTTVEPVLDGPYQPTTFNPPVSYWMLLAPTNAGVVDQGTNNTNRWLATILIKPNVQQVERTYTLFGQQVQVTVSNDSQTKWKFVDLSKQTQDGNYSQHGPLLSTPKLYGVMKHGGKIYTYNGETPNATTGYYSTTNFDTVNMTAYCDFYIIPLAQEAKCTEYINNGLPPIQNTRNIVPVSIVSRNIVYTRAQPNQDIVVSKTSLWKEMQYNRDIVIRFKFANSIIKSGGLGYKWSEVSFKPANYQYTYTRDGEEVTAHTTCSVNGINDFNYNGGSLPTDFVISKYEVIKENSFVYIDYWDDSQAFRNMVYVRSLAADLNSVMCTGGDYSFAIPVGNYPVMTGGAVSLHSAGVTLSTQFTDFVSLNSLRFRFRLSVEEPPFSILRTRVSGLYGLPAAKPNNSQEYYEIAGRFSLISLVPSNDDYQTPIINSVTVRQDLERQLGELRDEFNNLSQQIAMSQLIDLALLPLDMFSMFSGIKSTIDAAKSMATNVMKRFKKSSLANSVSTLTDSLSDAASSISRSASVRSVSSTASAWTEVSNITSDINVTTSSISTQTSTISRRLRLKEMATQTDGMNFDDISAAVLKTKIDKSTQLNTNTLPEIVTEASEKFIPNRAYRVIKDDEVLEASTDGKYFAYKVETILKRFHSMYKFADLVTDSPVISAIIDFKTLKNLNDNYGISRQQALNLLRSDPRVLREFINQDNPIIRNRIESLIMQCRL</sequence>